<sequence length="429" mass="45165">MTAITNIAAREILDSRGNPTVEVDVLLEDGSFGRAAVPSGASTGAHEAVELRDGDKSRYNGKGVLKAVDAVQSEILDAIGGMDAEDQVAVDEAMIALDGTPNKARLGANAILGVSLAVAKAAAETAGLPLYRYVGGVQGRVLPVPMMNIVNGGAHADNPIDFQEFMVMPVGATSLSDAVRMGAEIFHTLKSALKKAGHNTNVGDEGGFAPNLPSAEAALDFVMESINAAGFKPGSDVVLALDCAATEFFKDGAYRYEGEGQTRSIEQQVDYLAKLTEAYPILSIEDGMSEDDWDGWKLLTDRIGSRVQLVGDDLFVTNVERLARGIETGTANSILVKVNQIGSLTETLAAVDMAQRAGYTAVMSHRSGETEDSTIADLAVATNCGQIKTGSLARSDRLAKYNQLIRIEEGLGAQALYAGRSAIRQLAGR</sequence>
<name>ENO_METC4</name>
<evidence type="ECO:0000255" key="1">
    <source>
        <dbReference type="HAMAP-Rule" id="MF_00318"/>
    </source>
</evidence>
<feature type="chain" id="PRO_1000189956" description="Enolase">
    <location>
        <begin position="1"/>
        <end position="429"/>
    </location>
</feature>
<feature type="active site" description="Proton donor" evidence="1">
    <location>
        <position position="205"/>
    </location>
</feature>
<feature type="active site" description="Proton acceptor" evidence="1">
    <location>
        <position position="337"/>
    </location>
</feature>
<feature type="binding site" evidence="1">
    <location>
        <position position="163"/>
    </location>
    <ligand>
        <name>(2R)-2-phosphoglycerate</name>
        <dbReference type="ChEBI" id="CHEBI:58289"/>
    </ligand>
</feature>
<feature type="binding site" evidence="1">
    <location>
        <position position="242"/>
    </location>
    <ligand>
        <name>Mg(2+)</name>
        <dbReference type="ChEBI" id="CHEBI:18420"/>
    </ligand>
</feature>
<feature type="binding site" evidence="1">
    <location>
        <position position="285"/>
    </location>
    <ligand>
        <name>Mg(2+)</name>
        <dbReference type="ChEBI" id="CHEBI:18420"/>
    </ligand>
</feature>
<feature type="binding site" evidence="1">
    <location>
        <position position="312"/>
    </location>
    <ligand>
        <name>Mg(2+)</name>
        <dbReference type="ChEBI" id="CHEBI:18420"/>
    </ligand>
</feature>
<feature type="binding site" evidence="1">
    <location>
        <position position="337"/>
    </location>
    <ligand>
        <name>(2R)-2-phosphoglycerate</name>
        <dbReference type="ChEBI" id="CHEBI:58289"/>
    </ligand>
</feature>
<feature type="binding site" evidence="1">
    <location>
        <position position="366"/>
    </location>
    <ligand>
        <name>(2R)-2-phosphoglycerate</name>
        <dbReference type="ChEBI" id="CHEBI:58289"/>
    </ligand>
</feature>
<feature type="binding site" evidence="1">
    <location>
        <position position="367"/>
    </location>
    <ligand>
        <name>(2R)-2-phosphoglycerate</name>
        <dbReference type="ChEBI" id="CHEBI:58289"/>
    </ligand>
</feature>
<feature type="binding site" evidence="1">
    <location>
        <position position="388"/>
    </location>
    <ligand>
        <name>(2R)-2-phosphoglycerate</name>
        <dbReference type="ChEBI" id="CHEBI:58289"/>
    </ligand>
</feature>
<reference key="1">
    <citation type="submission" date="2008-12" db="EMBL/GenBank/DDBJ databases">
        <title>Complete sequence of chromosome of Methylobacterium chloromethanicum CM4.</title>
        <authorList>
            <consortium name="US DOE Joint Genome Institute"/>
            <person name="Lucas S."/>
            <person name="Copeland A."/>
            <person name="Lapidus A."/>
            <person name="Glavina del Rio T."/>
            <person name="Dalin E."/>
            <person name="Tice H."/>
            <person name="Bruce D."/>
            <person name="Goodwin L."/>
            <person name="Pitluck S."/>
            <person name="Chertkov O."/>
            <person name="Brettin T."/>
            <person name="Detter J.C."/>
            <person name="Han C."/>
            <person name="Larimer F."/>
            <person name="Land M."/>
            <person name="Hauser L."/>
            <person name="Kyrpides N."/>
            <person name="Mikhailova N."/>
            <person name="Marx C."/>
            <person name="Richardson P."/>
        </authorList>
    </citation>
    <scope>NUCLEOTIDE SEQUENCE [LARGE SCALE GENOMIC DNA]</scope>
    <source>
        <strain>CM4 / NCIMB 13688</strain>
    </source>
</reference>
<gene>
    <name evidence="1" type="primary">eno</name>
    <name type="ordered locus">Mchl_3012</name>
</gene>
<dbReference type="EC" id="4.2.1.11" evidence="1"/>
<dbReference type="EMBL" id="CP001298">
    <property type="protein sequence ID" value="ACK83850.1"/>
    <property type="molecule type" value="Genomic_DNA"/>
</dbReference>
<dbReference type="RefSeq" id="WP_015951248.1">
    <property type="nucleotide sequence ID" value="NC_011757.1"/>
</dbReference>
<dbReference type="SMR" id="B7KRB4"/>
<dbReference type="KEGG" id="mch:Mchl_3012"/>
<dbReference type="HOGENOM" id="CLU_031223_2_1_5"/>
<dbReference type="UniPathway" id="UPA00109">
    <property type="reaction ID" value="UER00187"/>
</dbReference>
<dbReference type="Proteomes" id="UP000002385">
    <property type="component" value="Chromosome"/>
</dbReference>
<dbReference type="GO" id="GO:0009986">
    <property type="term" value="C:cell surface"/>
    <property type="evidence" value="ECO:0007669"/>
    <property type="project" value="UniProtKB-SubCell"/>
</dbReference>
<dbReference type="GO" id="GO:0005576">
    <property type="term" value="C:extracellular region"/>
    <property type="evidence" value="ECO:0007669"/>
    <property type="project" value="UniProtKB-SubCell"/>
</dbReference>
<dbReference type="GO" id="GO:0000015">
    <property type="term" value="C:phosphopyruvate hydratase complex"/>
    <property type="evidence" value="ECO:0007669"/>
    <property type="project" value="InterPro"/>
</dbReference>
<dbReference type="GO" id="GO:0000287">
    <property type="term" value="F:magnesium ion binding"/>
    <property type="evidence" value="ECO:0007669"/>
    <property type="project" value="UniProtKB-UniRule"/>
</dbReference>
<dbReference type="GO" id="GO:0004634">
    <property type="term" value="F:phosphopyruvate hydratase activity"/>
    <property type="evidence" value="ECO:0007669"/>
    <property type="project" value="UniProtKB-UniRule"/>
</dbReference>
<dbReference type="GO" id="GO:0006096">
    <property type="term" value="P:glycolytic process"/>
    <property type="evidence" value="ECO:0007669"/>
    <property type="project" value="UniProtKB-UniRule"/>
</dbReference>
<dbReference type="CDD" id="cd03313">
    <property type="entry name" value="enolase"/>
    <property type="match status" value="1"/>
</dbReference>
<dbReference type="FunFam" id="3.20.20.120:FF:000001">
    <property type="entry name" value="Enolase"/>
    <property type="match status" value="1"/>
</dbReference>
<dbReference type="FunFam" id="3.30.390.10:FF:000001">
    <property type="entry name" value="Enolase"/>
    <property type="match status" value="1"/>
</dbReference>
<dbReference type="Gene3D" id="3.20.20.120">
    <property type="entry name" value="Enolase-like C-terminal domain"/>
    <property type="match status" value="1"/>
</dbReference>
<dbReference type="Gene3D" id="3.30.390.10">
    <property type="entry name" value="Enolase-like, N-terminal domain"/>
    <property type="match status" value="1"/>
</dbReference>
<dbReference type="HAMAP" id="MF_00318">
    <property type="entry name" value="Enolase"/>
    <property type="match status" value="1"/>
</dbReference>
<dbReference type="InterPro" id="IPR000941">
    <property type="entry name" value="Enolase"/>
</dbReference>
<dbReference type="InterPro" id="IPR036849">
    <property type="entry name" value="Enolase-like_C_sf"/>
</dbReference>
<dbReference type="InterPro" id="IPR029017">
    <property type="entry name" value="Enolase-like_N"/>
</dbReference>
<dbReference type="InterPro" id="IPR020810">
    <property type="entry name" value="Enolase_C"/>
</dbReference>
<dbReference type="InterPro" id="IPR020809">
    <property type="entry name" value="Enolase_CS"/>
</dbReference>
<dbReference type="InterPro" id="IPR020811">
    <property type="entry name" value="Enolase_N"/>
</dbReference>
<dbReference type="NCBIfam" id="TIGR01060">
    <property type="entry name" value="eno"/>
    <property type="match status" value="1"/>
</dbReference>
<dbReference type="PANTHER" id="PTHR11902">
    <property type="entry name" value="ENOLASE"/>
    <property type="match status" value="1"/>
</dbReference>
<dbReference type="PANTHER" id="PTHR11902:SF1">
    <property type="entry name" value="ENOLASE"/>
    <property type="match status" value="1"/>
</dbReference>
<dbReference type="Pfam" id="PF00113">
    <property type="entry name" value="Enolase_C"/>
    <property type="match status" value="1"/>
</dbReference>
<dbReference type="Pfam" id="PF03952">
    <property type="entry name" value="Enolase_N"/>
    <property type="match status" value="1"/>
</dbReference>
<dbReference type="PIRSF" id="PIRSF001400">
    <property type="entry name" value="Enolase"/>
    <property type="match status" value="1"/>
</dbReference>
<dbReference type="PRINTS" id="PR00148">
    <property type="entry name" value="ENOLASE"/>
</dbReference>
<dbReference type="SFLD" id="SFLDF00002">
    <property type="entry name" value="enolase"/>
    <property type="match status" value="1"/>
</dbReference>
<dbReference type="SFLD" id="SFLDG00178">
    <property type="entry name" value="enolase"/>
    <property type="match status" value="1"/>
</dbReference>
<dbReference type="SMART" id="SM01192">
    <property type="entry name" value="Enolase_C"/>
    <property type="match status" value="1"/>
</dbReference>
<dbReference type="SMART" id="SM01193">
    <property type="entry name" value="Enolase_N"/>
    <property type="match status" value="1"/>
</dbReference>
<dbReference type="SUPFAM" id="SSF51604">
    <property type="entry name" value="Enolase C-terminal domain-like"/>
    <property type="match status" value="1"/>
</dbReference>
<dbReference type="SUPFAM" id="SSF54826">
    <property type="entry name" value="Enolase N-terminal domain-like"/>
    <property type="match status" value="1"/>
</dbReference>
<dbReference type="PROSITE" id="PS00164">
    <property type="entry name" value="ENOLASE"/>
    <property type="match status" value="1"/>
</dbReference>
<organism>
    <name type="scientific">Methylorubrum extorquens (strain CM4 / NCIMB 13688)</name>
    <name type="common">Methylobacterium extorquens</name>
    <dbReference type="NCBI Taxonomy" id="440085"/>
    <lineage>
        <taxon>Bacteria</taxon>
        <taxon>Pseudomonadati</taxon>
        <taxon>Pseudomonadota</taxon>
        <taxon>Alphaproteobacteria</taxon>
        <taxon>Hyphomicrobiales</taxon>
        <taxon>Methylobacteriaceae</taxon>
        <taxon>Methylorubrum</taxon>
    </lineage>
</organism>
<comment type="function">
    <text evidence="1">Catalyzes the reversible conversion of 2-phosphoglycerate (2-PG) into phosphoenolpyruvate (PEP). It is essential for the degradation of carbohydrates via glycolysis.</text>
</comment>
<comment type="catalytic activity">
    <reaction evidence="1">
        <text>(2R)-2-phosphoglycerate = phosphoenolpyruvate + H2O</text>
        <dbReference type="Rhea" id="RHEA:10164"/>
        <dbReference type="ChEBI" id="CHEBI:15377"/>
        <dbReference type="ChEBI" id="CHEBI:58289"/>
        <dbReference type="ChEBI" id="CHEBI:58702"/>
        <dbReference type="EC" id="4.2.1.11"/>
    </reaction>
</comment>
<comment type="cofactor">
    <cofactor evidence="1">
        <name>Mg(2+)</name>
        <dbReference type="ChEBI" id="CHEBI:18420"/>
    </cofactor>
    <text evidence="1">Binds a second Mg(2+) ion via substrate during catalysis.</text>
</comment>
<comment type="pathway">
    <text evidence="1">Carbohydrate degradation; glycolysis; pyruvate from D-glyceraldehyde 3-phosphate: step 4/5.</text>
</comment>
<comment type="subcellular location">
    <subcellularLocation>
        <location evidence="1">Cytoplasm</location>
    </subcellularLocation>
    <subcellularLocation>
        <location evidence="1">Secreted</location>
    </subcellularLocation>
    <subcellularLocation>
        <location evidence="1">Cell surface</location>
    </subcellularLocation>
    <text evidence="1">Fractions of enolase are present in both the cytoplasm and on the cell surface.</text>
</comment>
<comment type="similarity">
    <text evidence="1">Belongs to the enolase family.</text>
</comment>
<accession>B7KRB4</accession>
<keyword id="KW-0963">Cytoplasm</keyword>
<keyword id="KW-0324">Glycolysis</keyword>
<keyword id="KW-0456">Lyase</keyword>
<keyword id="KW-0460">Magnesium</keyword>
<keyword id="KW-0479">Metal-binding</keyword>
<keyword id="KW-0964">Secreted</keyword>
<proteinExistence type="inferred from homology"/>
<protein>
    <recommendedName>
        <fullName evidence="1">Enolase</fullName>
        <ecNumber evidence="1">4.2.1.11</ecNumber>
    </recommendedName>
    <alternativeName>
        <fullName evidence="1">2-phospho-D-glycerate hydro-lyase</fullName>
    </alternativeName>
    <alternativeName>
        <fullName evidence="1">2-phosphoglycerate dehydratase</fullName>
    </alternativeName>
</protein>